<evidence type="ECO:0000255" key="1">
    <source>
        <dbReference type="HAMAP-Rule" id="MF_00252"/>
    </source>
</evidence>
<keyword id="KW-0030">Aminoacyl-tRNA synthetase</keyword>
<keyword id="KW-0067">ATP-binding</keyword>
<keyword id="KW-0963">Cytoplasm</keyword>
<keyword id="KW-0436">Ligase</keyword>
<keyword id="KW-0460">Magnesium</keyword>
<keyword id="KW-0479">Metal-binding</keyword>
<keyword id="KW-0547">Nucleotide-binding</keyword>
<keyword id="KW-0648">Protein biosynthesis</keyword>
<gene>
    <name evidence="1" type="primary">lysS</name>
    <name type="ordered locus">TT_C0679</name>
</gene>
<dbReference type="EC" id="6.1.1.6" evidence="1"/>
<dbReference type="EMBL" id="AE017221">
    <property type="protein sequence ID" value="AAS81027.1"/>
    <property type="molecule type" value="Genomic_DNA"/>
</dbReference>
<dbReference type="RefSeq" id="WP_011173121.1">
    <property type="nucleotide sequence ID" value="NC_005835.1"/>
</dbReference>
<dbReference type="SMR" id="Q72JT9"/>
<dbReference type="GeneID" id="3170107"/>
<dbReference type="KEGG" id="tth:TT_C0679"/>
<dbReference type="eggNOG" id="COG1190">
    <property type="taxonomic scope" value="Bacteria"/>
</dbReference>
<dbReference type="HOGENOM" id="CLU_008255_6_0_0"/>
<dbReference type="OrthoDB" id="9802326at2"/>
<dbReference type="Proteomes" id="UP000000592">
    <property type="component" value="Chromosome"/>
</dbReference>
<dbReference type="GO" id="GO:0005829">
    <property type="term" value="C:cytosol"/>
    <property type="evidence" value="ECO:0007669"/>
    <property type="project" value="TreeGrafter"/>
</dbReference>
<dbReference type="GO" id="GO:0005524">
    <property type="term" value="F:ATP binding"/>
    <property type="evidence" value="ECO:0007669"/>
    <property type="project" value="UniProtKB-UniRule"/>
</dbReference>
<dbReference type="GO" id="GO:0004824">
    <property type="term" value="F:lysine-tRNA ligase activity"/>
    <property type="evidence" value="ECO:0007669"/>
    <property type="project" value="UniProtKB-UniRule"/>
</dbReference>
<dbReference type="GO" id="GO:0000287">
    <property type="term" value="F:magnesium ion binding"/>
    <property type="evidence" value="ECO:0007669"/>
    <property type="project" value="UniProtKB-UniRule"/>
</dbReference>
<dbReference type="GO" id="GO:0000049">
    <property type="term" value="F:tRNA binding"/>
    <property type="evidence" value="ECO:0007669"/>
    <property type="project" value="TreeGrafter"/>
</dbReference>
<dbReference type="GO" id="GO:0006430">
    <property type="term" value="P:lysyl-tRNA aminoacylation"/>
    <property type="evidence" value="ECO:0007669"/>
    <property type="project" value="UniProtKB-UniRule"/>
</dbReference>
<dbReference type="CDD" id="cd00775">
    <property type="entry name" value="LysRS_core"/>
    <property type="match status" value="1"/>
</dbReference>
<dbReference type="CDD" id="cd04322">
    <property type="entry name" value="LysRS_N"/>
    <property type="match status" value="1"/>
</dbReference>
<dbReference type="FunFam" id="2.40.50.140:FF:000024">
    <property type="entry name" value="Lysine--tRNA ligase"/>
    <property type="match status" value="1"/>
</dbReference>
<dbReference type="Gene3D" id="3.30.930.10">
    <property type="entry name" value="Bira Bifunctional Protein, Domain 2"/>
    <property type="match status" value="1"/>
</dbReference>
<dbReference type="Gene3D" id="2.40.50.140">
    <property type="entry name" value="Nucleic acid-binding proteins"/>
    <property type="match status" value="1"/>
</dbReference>
<dbReference type="HAMAP" id="MF_00252">
    <property type="entry name" value="Lys_tRNA_synth_class2"/>
    <property type="match status" value="1"/>
</dbReference>
<dbReference type="InterPro" id="IPR004364">
    <property type="entry name" value="Aa-tRNA-synt_II"/>
</dbReference>
<dbReference type="InterPro" id="IPR006195">
    <property type="entry name" value="aa-tRNA-synth_II"/>
</dbReference>
<dbReference type="InterPro" id="IPR045864">
    <property type="entry name" value="aa-tRNA-synth_II/BPL/LPL"/>
</dbReference>
<dbReference type="InterPro" id="IPR002313">
    <property type="entry name" value="Lys-tRNA-ligase_II"/>
</dbReference>
<dbReference type="InterPro" id="IPR044136">
    <property type="entry name" value="Lys-tRNA-ligase_II_N"/>
</dbReference>
<dbReference type="InterPro" id="IPR018149">
    <property type="entry name" value="Lys-tRNA-synth_II_C"/>
</dbReference>
<dbReference type="InterPro" id="IPR012340">
    <property type="entry name" value="NA-bd_OB-fold"/>
</dbReference>
<dbReference type="InterPro" id="IPR004365">
    <property type="entry name" value="NA-bd_OB_tRNA"/>
</dbReference>
<dbReference type="NCBIfam" id="TIGR00499">
    <property type="entry name" value="lysS_bact"/>
    <property type="match status" value="1"/>
</dbReference>
<dbReference type="NCBIfam" id="NF001756">
    <property type="entry name" value="PRK00484.1"/>
    <property type="match status" value="1"/>
</dbReference>
<dbReference type="PANTHER" id="PTHR42918:SF15">
    <property type="entry name" value="LYSINE--TRNA LIGASE, CHLOROPLASTIC_MITOCHONDRIAL"/>
    <property type="match status" value="1"/>
</dbReference>
<dbReference type="PANTHER" id="PTHR42918">
    <property type="entry name" value="LYSYL-TRNA SYNTHETASE"/>
    <property type="match status" value="1"/>
</dbReference>
<dbReference type="Pfam" id="PF00152">
    <property type="entry name" value="tRNA-synt_2"/>
    <property type="match status" value="1"/>
</dbReference>
<dbReference type="Pfam" id="PF01336">
    <property type="entry name" value="tRNA_anti-codon"/>
    <property type="match status" value="1"/>
</dbReference>
<dbReference type="PRINTS" id="PR00982">
    <property type="entry name" value="TRNASYNTHLYS"/>
</dbReference>
<dbReference type="SUPFAM" id="SSF55681">
    <property type="entry name" value="Class II aaRS and biotin synthetases"/>
    <property type="match status" value="1"/>
</dbReference>
<dbReference type="SUPFAM" id="SSF50249">
    <property type="entry name" value="Nucleic acid-binding proteins"/>
    <property type="match status" value="1"/>
</dbReference>
<dbReference type="PROSITE" id="PS50862">
    <property type="entry name" value="AA_TRNA_LIGASE_II"/>
    <property type="match status" value="1"/>
</dbReference>
<sequence length="492" mass="56921">MNDQTRQRLLNLEALVEAGFAPYPYRFPKTHSAEAILKAKRGAPPESEWPEEEVAVAGRLVALRRMGKVTFAHLLDETGRIQLYFQRDLTPKYELLKKLDVGDILGVRGHPFTTKTGEVTVKVLDWTPLVKSLHPLPDKWHGLRDKEVRYRQRYLDLIVNPEVREVFRRRSEIVRYIRRFFEAKGFLEVETPILQPTTGGAEARPFKTYHNALDHEFYLRISLELYLKRLLVGGYEKVFEIGRNFRNEGIDHNHNPEFTMLEAYWAYADYQDMAGLVEELLSGLVLHLFGSHEVPYQGRVLNFKPPFRRISFVEALKEKAGLPFDPLDLERLRLWADAHHPELSQVPNYKLLDKLFGIYVEPELQDPTFVFDFPLAISPLAKRHREKPGLVERWDLYAGGMELAPCYSELNDPLDQRERFLEQARRRKEGDEEAPEPDEDFLLALEYGMPPAAGLGLGIDRLAMLLTDQPSLRDVLLFPLLKPKKEAVEEGV</sequence>
<reference key="1">
    <citation type="journal article" date="2004" name="Nat. Biotechnol.">
        <title>The genome sequence of the extreme thermophile Thermus thermophilus.</title>
        <authorList>
            <person name="Henne A."/>
            <person name="Brueggemann H."/>
            <person name="Raasch C."/>
            <person name="Wiezer A."/>
            <person name="Hartsch T."/>
            <person name="Liesegang H."/>
            <person name="Johann A."/>
            <person name="Lienard T."/>
            <person name="Gohl O."/>
            <person name="Martinez-Arias R."/>
            <person name="Jacobi C."/>
            <person name="Starkuviene V."/>
            <person name="Schlenczeck S."/>
            <person name="Dencker S."/>
            <person name="Huber R."/>
            <person name="Klenk H.-P."/>
            <person name="Kramer W."/>
            <person name="Merkl R."/>
            <person name="Gottschalk G."/>
            <person name="Fritz H.-J."/>
        </authorList>
    </citation>
    <scope>NUCLEOTIDE SEQUENCE [LARGE SCALE GENOMIC DNA]</scope>
    <source>
        <strain>ATCC BAA-163 / DSM 7039 / HB27</strain>
    </source>
</reference>
<protein>
    <recommendedName>
        <fullName evidence="1">Lysine--tRNA ligase</fullName>
        <ecNumber evidence="1">6.1.1.6</ecNumber>
    </recommendedName>
    <alternativeName>
        <fullName evidence="1">Lysyl-tRNA synthetase</fullName>
        <shortName evidence="1">LysRS</shortName>
    </alternativeName>
</protein>
<accession>Q72JT9</accession>
<feature type="chain" id="PRO_1000012959" description="Lysine--tRNA ligase">
    <location>
        <begin position="1"/>
        <end position="492"/>
    </location>
</feature>
<feature type="binding site" evidence="1">
    <location>
        <position position="395"/>
    </location>
    <ligand>
        <name>Mg(2+)</name>
        <dbReference type="ChEBI" id="CHEBI:18420"/>
        <label>1</label>
    </ligand>
</feature>
<feature type="binding site" evidence="1">
    <location>
        <position position="402"/>
    </location>
    <ligand>
        <name>Mg(2+)</name>
        <dbReference type="ChEBI" id="CHEBI:18420"/>
        <label>1</label>
    </ligand>
</feature>
<feature type="binding site" evidence="1">
    <location>
        <position position="402"/>
    </location>
    <ligand>
        <name>Mg(2+)</name>
        <dbReference type="ChEBI" id="CHEBI:18420"/>
        <label>2</label>
    </ligand>
</feature>
<comment type="catalytic activity">
    <reaction evidence="1">
        <text>tRNA(Lys) + L-lysine + ATP = L-lysyl-tRNA(Lys) + AMP + diphosphate</text>
        <dbReference type="Rhea" id="RHEA:20792"/>
        <dbReference type="Rhea" id="RHEA-COMP:9696"/>
        <dbReference type="Rhea" id="RHEA-COMP:9697"/>
        <dbReference type="ChEBI" id="CHEBI:30616"/>
        <dbReference type="ChEBI" id="CHEBI:32551"/>
        <dbReference type="ChEBI" id="CHEBI:33019"/>
        <dbReference type="ChEBI" id="CHEBI:78442"/>
        <dbReference type="ChEBI" id="CHEBI:78529"/>
        <dbReference type="ChEBI" id="CHEBI:456215"/>
        <dbReference type="EC" id="6.1.1.6"/>
    </reaction>
</comment>
<comment type="cofactor">
    <cofactor evidence="1">
        <name>Mg(2+)</name>
        <dbReference type="ChEBI" id="CHEBI:18420"/>
    </cofactor>
    <text evidence="1">Binds 3 Mg(2+) ions per subunit.</text>
</comment>
<comment type="subunit">
    <text evidence="1">Homodimer.</text>
</comment>
<comment type="subcellular location">
    <subcellularLocation>
        <location evidence="1">Cytoplasm</location>
    </subcellularLocation>
</comment>
<comment type="similarity">
    <text evidence="1">Belongs to the class-II aminoacyl-tRNA synthetase family.</text>
</comment>
<proteinExistence type="inferred from homology"/>
<name>SYK_THET2</name>
<organism>
    <name type="scientific">Thermus thermophilus (strain ATCC BAA-163 / DSM 7039 / HB27)</name>
    <dbReference type="NCBI Taxonomy" id="262724"/>
    <lineage>
        <taxon>Bacteria</taxon>
        <taxon>Thermotogati</taxon>
        <taxon>Deinococcota</taxon>
        <taxon>Deinococci</taxon>
        <taxon>Thermales</taxon>
        <taxon>Thermaceae</taxon>
        <taxon>Thermus</taxon>
    </lineage>
</organism>